<name>MDTI_KLEP7</name>
<organism>
    <name type="scientific">Klebsiella pneumoniae subsp. pneumoniae (strain ATCC 700721 / MGH 78578)</name>
    <dbReference type="NCBI Taxonomy" id="272620"/>
    <lineage>
        <taxon>Bacteria</taxon>
        <taxon>Pseudomonadati</taxon>
        <taxon>Pseudomonadota</taxon>
        <taxon>Gammaproteobacteria</taxon>
        <taxon>Enterobacterales</taxon>
        <taxon>Enterobacteriaceae</taxon>
        <taxon>Klebsiella/Raoultella group</taxon>
        <taxon>Klebsiella</taxon>
        <taxon>Klebsiella pneumoniae complex</taxon>
    </lineage>
</organism>
<accession>A6T8S6</accession>
<evidence type="ECO:0000255" key="1">
    <source>
        <dbReference type="HAMAP-Rule" id="MF_01597"/>
    </source>
</evidence>
<gene>
    <name evidence="1" type="primary">mdtI</name>
    <name type="ordered locus">KPN78578_15360</name>
    <name type="ORF">KPN_01566</name>
</gene>
<protein>
    <recommendedName>
        <fullName evidence="1">Spermidine export protein MdtI</fullName>
    </recommendedName>
</protein>
<comment type="function">
    <text evidence="1">Catalyzes the excretion of spermidine.</text>
</comment>
<comment type="subunit">
    <text evidence="1">Forms a complex with MdtJ.</text>
</comment>
<comment type="subcellular location">
    <subcellularLocation>
        <location evidence="1">Cell inner membrane</location>
        <topology evidence="1">Multi-pass membrane protein</topology>
    </subcellularLocation>
</comment>
<comment type="similarity">
    <text evidence="1">Belongs to the drug/metabolite transporter (DMT) superfamily. Small multidrug resistance (SMR) (TC 2.A.7.1) family. MdtI subfamily.</text>
</comment>
<dbReference type="EMBL" id="CP000647">
    <property type="protein sequence ID" value="ABR76997.1"/>
    <property type="molecule type" value="Genomic_DNA"/>
</dbReference>
<dbReference type="SMR" id="A6T8S6"/>
<dbReference type="STRING" id="272620.KPN_01566"/>
<dbReference type="CARD" id="ARO:3004583">
    <property type="molecule name" value="Kpne_KpnF"/>
    <property type="mechanism identifier" value="ARO:0010000"/>
    <property type="mechanism name" value="antibiotic efflux"/>
</dbReference>
<dbReference type="PaxDb" id="272620-KPN_01566"/>
<dbReference type="EnsemblBacteria" id="ABR76997">
    <property type="protein sequence ID" value="ABR76997"/>
    <property type="gene ID" value="KPN_01566"/>
</dbReference>
<dbReference type="KEGG" id="kpn:KPN_01566"/>
<dbReference type="HOGENOM" id="CLU_133067_0_4_6"/>
<dbReference type="Proteomes" id="UP000000265">
    <property type="component" value="Chromosome"/>
</dbReference>
<dbReference type="GO" id="GO:0005886">
    <property type="term" value="C:plasma membrane"/>
    <property type="evidence" value="ECO:0007669"/>
    <property type="project" value="UniProtKB-SubCell"/>
</dbReference>
<dbReference type="GO" id="GO:0015199">
    <property type="term" value="F:amino-acid betaine transmembrane transporter activity"/>
    <property type="evidence" value="ECO:0007669"/>
    <property type="project" value="TreeGrafter"/>
</dbReference>
<dbReference type="GO" id="GO:0015297">
    <property type="term" value="F:antiporter activity"/>
    <property type="evidence" value="ECO:0007669"/>
    <property type="project" value="TreeGrafter"/>
</dbReference>
<dbReference type="GO" id="GO:0015220">
    <property type="term" value="F:choline transmembrane transporter activity"/>
    <property type="evidence" value="ECO:0007669"/>
    <property type="project" value="TreeGrafter"/>
</dbReference>
<dbReference type="GO" id="GO:0015606">
    <property type="term" value="F:spermidine transmembrane transporter activity"/>
    <property type="evidence" value="ECO:0007669"/>
    <property type="project" value="UniProtKB-UniRule"/>
</dbReference>
<dbReference type="GO" id="GO:0031460">
    <property type="term" value="P:glycine betaine transport"/>
    <property type="evidence" value="ECO:0007669"/>
    <property type="project" value="TreeGrafter"/>
</dbReference>
<dbReference type="FunFam" id="1.10.3730.20:FF:000001">
    <property type="entry name" value="Quaternary ammonium compound resistance transporter SugE"/>
    <property type="match status" value="1"/>
</dbReference>
<dbReference type="Gene3D" id="1.10.3730.20">
    <property type="match status" value="1"/>
</dbReference>
<dbReference type="HAMAP" id="MF_01597">
    <property type="entry name" value="MdtI"/>
    <property type="match status" value="1"/>
</dbReference>
<dbReference type="InterPro" id="IPR000390">
    <property type="entry name" value="Small_drug/metabolite_transptr"/>
</dbReference>
<dbReference type="InterPro" id="IPR045324">
    <property type="entry name" value="Small_multidrug_res"/>
</dbReference>
<dbReference type="InterPro" id="IPR023737">
    <property type="entry name" value="Spermidine_export_MdtI"/>
</dbReference>
<dbReference type="NCBIfam" id="NF007934">
    <property type="entry name" value="PRK10650.1"/>
    <property type="match status" value="1"/>
</dbReference>
<dbReference type="PANTHER" id="PTHR30561">
    <property type="entry name" value="SMR FAMILY PROTON-DEPENDENT DRUG EFFLUX TRANSPORTER SUGE"/>
    <property type="match status" value="1"/>
</dbReference>
<dbReference type="PANTHER" id="PTHR30561:SF6">
    <property type="entry name" value="SPERMIDINE EXPORT PROTEIN MDTI"/>
    <property type="match status" value="1"/>
</dbReference>
<dbReference type="Pfam" id="PF00893">
    <property type="entry name" value="Multi_Drug_Res"/>
    <property type="match status" value="1"/>
</dbReference>
<dbReference type="SUPFAM" id="SSF103481">
    <property type="entry name" value="Multidrug resistance efflux transporter EmrE"/>
    <property type="match status" value="1"/>
</dbReference>
<sequence length="109" mass="11677">MQQFEWIHAAWLAIAIVLEIIANVFLKFSDGFRRKIYGILSLAAVLGAFSALSQAVKGIDLSVAYALWGGFGIAATIAAGWVLFGQRLNNKGWAGVILLVAGMVLIKLA</sequence>
<feature type="chain" id="PRO_0000331142" description="Spermidine export protein MdtI">
    <location>
        <begin position="1"/>
        <end position="109"/>
    </location>
</feature>
<feature type="transmembrane region" description="Helical" evidence="1">
    <location>
        <begin position="6"/>
        <end position="26"/>
    </location>
</feature>
<feature type="transmembrane region" description="Helical" evidence="1">
    <location>
        <begin position="36"/>
        <end position="56"/>
    </location>
</feature>
<feature type="transmembrane region" description="Helical" evidence="1">
    <location>
        <begin position="64"/>
        <end position="84"/>
    </location>
</feature>
<feature type="transmembrane region" description="Helical" evidence="1">
    <location>
        <begin position="88"/>
        <end position="108"/>
    </location>
</feature>
<keyword id="KW-0997">Cell inner membrane</keyword>
<keyword id="KW-1003">Cell membrane</keyword>
<keyword id="KW-0472">Membrane</keyword>
<keyword id="KW-0812">Transmembrane</keyword>
<keyword id="KW-1133">Transmembrane helix</keyword>
<keyword id="KW-0813">Transport</keyword>
<reference key="1">
    <citation type="submission" date="2006-09" db="EMBL/GenBank/DDBJ databases">
        <authorList>
            <consortium name="The Klebsiella pneumonia Genome Sequencing Project"/>
            <person name="McClelland M."/>
            <person name="Sanderson E.K."/>
            <person name="Spieth J."/>
            <person name="Clifton W.S."/>
            <person name="Latreille P."/>
            <person name="Sabo A."/>
            <person name="Pepin K."/>
            <person name="Bhonagiri V."/>
            <person name="Porwollik S."/>
            <person name="Ali J."/>
            <person name="Wilson R.K."/>
        </authorList>
    </citation>
    <scope>NUCLEOTIDE SEQUENCE [LARGE SCALE GENOMIC DNA]</scope>
    <source>
        <strain>ATCC 700721 / MGH 78578</strain>
    </source>
</reference>
<proteinExistence type="inferred from homology"/>